<gene>
    <name type="ordered locus">MJ0263</name>
</gene>
<dbReference type="EMBL" id="L77117">
    <property type="protein sequence ID" value="AAB98249.1"/>
    <property type="molecule type" value="Genomic_DNA"/>
</dbReference>
<dbReference type="PIR" id="H64332">
    <property type="entry name" value="H64332"/>
</dbReference>
<dbReference type="RefSeq" id="WP_010869760.1">
    <property type="nucleotide sequence ID" value="NC_000909.1"/>
</dbReference>
<dbReference type="SMR" id="O06917"/>
<dbReference type="STRING" id="243232.MJ_0263"/>
<dbReference type="PaxDb" id="243232-MJ_0263"/>
<dbReference type="EnsemblBacteria" id="AAB98249">
    <property type="protein sequence ID" value="AAB98249"/>
    <property type="gene ID" value="MJ_0263"/>
</dbReference>
<dbReference type="GeneID" id="1451117"/>
<dbReference type="KEGG" id="mja:MJ_0263"/>
<dbReference type="eggNOG" id="arCOG03038">
    <property type="taxonomic scope" value="Archaea"/>
</dbReference>
<dbReference type="HOGENOM" id="CLU_003728_2_5_2"/>
<dbReference type="InParanoid" id="O06917"/>
<dbReference type="OrthoDB" id="115601at2157"/>
<dbReference type="PhylomeDB" id="O06917"/>
<dbReference type="Proteomes" id="UP000000805">
    <property type="component" value="Chromosome"/>
</dbReference>
<dbReference type="Gene3D" id="1.25.40.10">
    <property type="entry name" value="Tetratricopeptide repeat domain"/>
    <property type="match status" value="2"/>
</dbReference>
<dbReference type="InterPro" id="IPR011990">
    <property type="entry name" value="TPR-like_helical_dom_sf"/>
</dbReference>
<dbReference type="InterPro" id="IPR019734">
    <property type="entry name" value="TPR_rpt"/>
</dbReference>
<dbReference type="InterPro" id="IPR051685">
    <property type="entry name" value="Ycf3/AcsC/BcsC/TPR_MFPF"/>
</dbReference>
<dbReference type="PANTHER" id="PTHR44943">
    <property type="entry name" value="CELLULOSE SYNTHASE OPERON PROTEIN C"/>
    <property type="match status" value="1"/>
</dbReference>
<dbReference type="PANTHER" id="PTHR44943:SF8">
    <property type="entry name" value="TPR REPEAT-CONTAINING PROTEIN MJ0263"/>
    <property type="match status" value="1"/>
</dbReference>
<dbReference type="Pfam" id="PF13432">
    <property type="entry name" value="TPR_16"/>
    <property type="match status" value="2"/>
</dbReference>
<dbReference type="Pfam" id="PF14559">
    <property type="entry name" value="TPR_19"/>
    <property type="match status" value="1"/>
</dbReference>
<dbReference type="Pfam" id="PF13181">
    <property type="entry name" value="TPR_8"/>
    <property type="match status" value="1"/>
</dbReference>
<dbReference type="SMART" id="SM00028">
    <property type="entry name" value="TPR"/>
    <property type="match status" value="8"/>
</dbReference>
<dbReference type="SUPFAM" id="SSF48452">
    <property type="entry name" value="TPR-like"/>
    <property type="match status" value="2"/>
</dbReference>
<dbReference type="PROSITE" id="PS50005">
    <property type="entry name" value="TPR"/>
    <property type="match status" value="7"/>
</dbReference>
<dbReference type="PROSITE" id="PS50293">
    <property type="entry name" value="TPR_REGION"/>
    <property type="match status" value="1"/>
</dbReference>
<name>Y263_METJA</name>
<feature type="chain" id="PRO_0000106456" description="TPR repeat-containing protein MJ0263">
    <location>
        <begin position="1"/>
        <end position="320"/>
    </location>
</feature>
<feature type="repeat" description="TPR 1">
    <location>
        <begin position="12"/>
        <end position="45"/>
    </location>
</feature>
<feature type="repeat" description="TPR 2">
    <location>
        <begin position="46"/>
        <end position="79"/>
    </location>
</feature>
<feature type="repeat" description="TPR 3">
    <location>
        <begin position="80"/>
        <end position="113"/>
    </location>
</feature>
<feature type="repeat" description="TPR 4">
    <location>
        <begin position="114"/>
        <end position="147"/>
    </location>
</feature>
<feature type="repeat" description="TPR 5">
    <location>
        <begin position="148"/>
        <end position="181"/>
    </location>
</feature>
<feature type="repeat" description="TPR 6">
    <location>
        <begin position="182"/>
        <end position="215"/>
    </location>
</feature>
<feature type="repeat" description="TPR 7">
    <location>
        <begin position="216"/>
        <end position="249"/>
    </location>
</feature>
<feature type="repeat" description="TPR 8">
    <location>
        <begin position="250"/>
        <end position="283"/>
    </location>
</feature>
<feature type="repeat" description="TPR 9">
    <location>
        <begin position="289"/>
        <end position="320"/>
    </location>
</feature>
<reference key="1">
    <citation type="journal article" date="1996" name="Science">
        <title>Complete genome sequence of the methanogenic archaeon, Methanococcus jannaschii.</title>
        <authorList>
            <person name="Bult C.J."/>
            <person name="White O."/>
            <person name="Olsen G.J."/>
            <person name="Zhou L."/>
            <person name="Fleischmann R.D."/>
            <person name="Sutton G.G."/>
            <person name="Blake J.A."/>
            <person name="FitzGerald L.M."/>
            <person name="Clayton R.A."/>
            <person name="Gocayne J.D."/>
            <person name="Kerlavage A.R."/>
            <person name="Dougherty B.A."/>
            <person name="Tomb J.-F."/>
            <person name="Adams M.D."/>
            <person name="Reich C.I."/>
            <person name="Overbeek R."/>
            <person name="Kirkness E.F."/>
            <person name="Weinstock K.G."/>
            <person name="Merrick J.M."/>
            <person name="Glodek A."/>
            <person name="Scott J.L."/>
            <person name="Geoghagen N.S.M."/>
            <person name="Weidman J.F."/>
            <person name="Fuhrmann J.L."/>
            <person name="Nguyen D."/>
            <person name="Utterback T.R."/>
            <person name="Kelley J.M."/>
            <person name="Peterson J.D."/>
            <person name="Sadow P.W."/>
            <person name="Hanna M.C."/>
            <person name="Cotton M.D."/>
            <person name="Roberts K.M."/>
            <person name="Hurst M.A."/>
            <person name="Kaine B.P."/>
            <person name="Borodovsky M."/>
            <person name="Klenk H.-P."/>
            <person name="Fraser C.M."/>
            <person name="Smith H.O."/>
            <person name="Woese C.R."/>
            <person name="Venter J.C."/>
        </authorList>
    </citation>
    <scope>NUCLEOTIDE SEQUENCE [LARGE SCALE GENOMIC DNA]</scope>
    <source>
        <strain>ATCC 43067 / DSM 2661 / JAL-1 / JCM 10045 / NBRC 100440</strain>
    </source>
</reference>
<reference key="2">
    <citation type="journal article" date="1998" name="Trends Biochem. Sci.">
        <title>Tetratrico-peptide-repeat proteins in the archaeon Methanococcus jannaschii.</title>
        <authorList>
            <person name="Kyrpides N.C."/>
            <person name="Woese C.R."/>
        </authorList>
    </citation>
    <scope>DOMAINS TPR REPEATS</scope>
</reference>
<sequence length="320" mass="36862">MDYDNMVKTLEILKDVVNALECADKGNFDKALEYLEKAQKVDKDNPLVLYVKGIVLKLKGDMEKAEKYFECLENIEGTSLLSLGNLICLTFVKGEYERTLKYIEKLSRLSKPCYLSPFHKALIYIEFGEFEKALEALDEFLKIYPNLTSILRQKASILEILGKLDEALDCVNKILSIKKDDAHAWYLKGRILKKLGNIKEALDALKMAINLNENLVHVYKDIAYLELANNNYEEALNYITKYLEKFPNDVEAKFYLALIYENLNKVDDALKIYDKIISNKNVKDKLLIKSSILNKARILEKLGKIEEAVETYNKAFDNNI</sequence>
<accession>O06917</accession>
<protein>
    <recommendedName>
        <fullName>TPR repeat-containing protein MJ0263</fullName>
    </recommendedName>
</protein>
<organism>
    <name type="scientific">Methanocaldococcus jannaschii (strain ATCC 43067 / DSM 2661 / JAL-1 / JCM 10045 / NBRC 100440)</name>
    <name type="common">Methanococcus jannaschii</name>
    <dbReference type="NCBI Taxonomy" id="243232"/>
    <lineage>
        <taxon>Archaea</taxon>
        <taxon>Methanobacteriati</taxon>
        <taxon>Methanobacteriota</taxon>
        <taxon>Methanomada group</taxon>
        <taxon>Methanococci</taxon>
        <taxon>Methanococcales</taxon>
        <taxon>Methanocaldococcaceae</taxon>
        <taxon>Methanocaldococcus</taxon>
    </lineage>
</organism>
<keyword id="KW-1185">Reference proteome</keyword>
<keyword id="KW-0677">Repeat</keyword>
<keyword id="KW-0802">TPR repeat</keyword>
<proteinExistence type="predicted"/>